<feature type="chain" id="PRO_0000314570" description="Chalcone--flavanone isomerase">
    <location>
        <begin position="1"/>
        <end position="226"/>
    </location>
</feature>
<feature type="binding site" evidence="1">
    <location>
        <position position="51"/>
    </location>
    <ligand>
        <name>substrate</name>
    </ligand>
</feature>
<feature type="binding site" evidence="1">
    <location>
        <position position="116"/>
    </location>
    <ligand>
        <name>substrate</name>
    </ligand>
</feature>
<feature type="binding site" evidence="1">
    <location>
        <position position="194"/>
    </location>
    <ligand>
        <name>substrate</name>
    </ligand>
</feature>
<feature type="site" description="Important for catalytic activity" evidence="1">
    <location>
        <position position="109"/>
    </location>
</feature>
<feature type="sequence conflict" description="In Ref. 1; AAZ80911." evidence="2" ref="1">
    <original>G</original>
    <variation>A</variation>
    <location>
        <position position="66"/>
    </location>
</feature>
<protein>
    <recommendedName>
        <fullName>Chalcone--flavanone isomerase</fullName>
        <shortName>Chalcone isomerase</shortName>
        <ecNumber>5.5.1.6</ecNumber>
    </recommendedName>
</protein>
<comment type="function">
    <text evidence="1">Catalyzes the intramolecular cyclization of bicyclic chalcones into tricyclic (S)-flavanones. Responsible for the isomerization of 4,2',4',6'-tetrahydroxychalcone (also termed chalcone) into naringenin (By similarity).</text>
</comment>
<comment type="catalytic activity">
    <reaction>
        <text>a chalcone = a flavanone.</text>
        <dbReference type="EC" id="5.5.1.6"/>
    </reaction>
</comment>
<comment type="pathway">
    <text>Secondary metabolite biosynthesis; flavonoid biosynthesis.</text>
</comment>
<comment type="miscellaneous">
    <text>Part of the biosynthetic pathway for all classes of flavonoids, a large class of secondary plant metabolites, many of which are brightly colored.</text>
</comment>
<comment type="similarity">
    <text evidence="2">Belongs to the chalcone isomerase family.</text>
</comment>
<organism>
    <name type="scientific">Canna generalis</name>
    <name type="common">Canna lily</name>
    <name type="synonym">Canna glauca x Canna indica</name>
    <dbReference type="NCBI Taxonomy" id="341692"/>
    <lineage>
        <taxon>Eukaryota</taxon>
        <taxon>Viridiplantae</taxon>
        <taxon>Streptophyta</taxon>
        <taxon>Embryophyta</taxon>
        <taxon>Tracheophyta</taxon>
        <taxon>Spermatophyta</taxon>
        <taxon>Magnoliopsida</taxon>
        <taxon>Liliopsida</taxon>
        <taxon>Zingiberales</taxon>
        <taxon>Cannaceae</taxon>
        <taxon>Canna</taxon>
    </lineage>
</organism>
<gene>
    <name type="primary">CHI</name>
</gene>
<evidence type="ECO:0000250" key="1"/>
<evidence type="ECO:0000305" key="2"/>
<sequence>MAQAGVSLPKLVIGEVTFPPAAAPPGSSSSLFLAGAGERGLEIDRQFVVFTAIGVYLEDLAVSTLGPKWKGKTADDLAGNSDFFRDIFTGPFEKFTRITMVKPLSGQQYSEKVEENCVAHWKAAGTYTEAEAAAVEKFKEACKNETFPPGTSILFTHQVSPASLTITFWREGSMPETGNTVIESKALSEAILESIIGKHGVSPGAKRSVAQRLSEILEEVKLEGSK</sequence>
<accession>Q3Y4F4</accession>
<accession>Q3Y4F3</accession>
<reference key="1">
    <citation type="submission" date="2005-08" db="EMBL/GenBank/DDBJ databases">
        <title>Isolation and characterization of a Canna generalis gene encoding chalcone flavonone isomerase.</title>
        <authorList>
            <person name="Li J."/>
            <person name="Li M.R."/>
            <person name="Li H.Q."/>
        </authorList>
    </citation>
    <scope>NUCLEOTIDE SEQUENCE [GENOMIC DNA / MRNA]</scope>
</reference>
<dbReference type="EC" id="5.5.1.6"/>
<dbReference type="EMBL" id="DQ160231">
    <property type="protein sequence ID" value="AAZ80910.1"/>
    <property type="molecule type" value="Genomic_DNA"/>
</dbReference>
<dbReference type="EMBL" id="DQ160232">
    <property type="protein sequence ID" value="AAZ80911.1"/>
    <property type="molecule type" value="mRNA"/>
</dbReference>
<dbReference type="SMR" id="Q3Y4F4"/>
<dbReference type="UniPathway" id="UPA00154"/>
<dbReference type="GO" id="GO:0045430">
    <property type="term" value="F:chalcone isomerase activity"/>
    <property type="evidence" value="ECO:0007669"/>
    <property type="project" value="UniProtKB-EC"/>
</dbReference>
<dbReference type="GO" id="GO:0009813">
    <property type="term" value="P:flavonoid biosynthetic process"/>
    <property type="evidence" value="ECO:0007669"/>
    <property type="project" value="UniProtKB-UniPathway"/>
</dbReference>
<dbReference type="Gene3D" id="1.10.890.20">
    <property type="match status" value="1"/>
</dbReference>
<dbReference type="Gene3D" id="3.50.70.10">
    <property type="match status" value="1"/>
</dbReference>
<dbReference type="InterPro" id="IPR044164">
    <property type="entry name" value="CFI"/>
</dbReference>
<dbReference type="InterPro" id="IPR016087">
    <property type="entry name" value="Chalcone_isomerase"/>
</dbReference>
<dbReference type="InterPro" id="IPR016088">
    <property type="entry name" value="Chalcone_isomerase_3-sand"/>
</dbReference>
<dbReference type="InterPro" id="IPR016089">
    <property type="entry name" value="Chalcone_isomerase_bundle_sf"/>
</dbReference>
<dbReference type="InterPro" id="IPR036298">
    <property type="entry name" value="Chalcone_isomerase_sf"/>
</dbReference>
<dbReference type="PANTHER" id="PTHR28039:SF8">
    <property type="entry name" value="CHALCONE--FLAVANONE ISOMERASE 1-RELATED"/>
    <property type="match status" value="1"/>
</dbReference>
<dbReference type="PANTHER" id="PTHR28039">
    <property type="entry name" value="CHALCONE--FLAVONONE ISOMERASE 1-RELATED"/>
    <property type="match status" value="1"/>
</dbReference>
<dbReference type="Pfam" id="PF02431">
    <property type="entry name" value="Chalcone"/>
    <property type="match status" value="1"/>
</dbReference>
<dbReference type="SUPFAM" id="SSF54626">
    <property type="entry name" value="Chalcone isomerase"/>
    <property type="match status" value="1"/>
</dbReference>
<proteinExistence type="evidence at transcript level"/>
<name>CFI_CANGE</name>
<keyword id="KW-0284">Flavonoid biosynthesis</keyword>
<keyword id="KW-0413">Isomerase</keyword>